<sequence>MSDDVALPLEFTDAAANKVKSLIADEDNPNLKLRVYITGGGCSGFQYGFTFDDQVNEGDMTIEKQGVGLVVDPMSLQYLVGGSVDYTEGLEGSRFIVTNPNAKSTCGCGSSFSI</sequence>
<dbReference type="EMBL" id="CP000034">
    <property type="protein sequence ID" value="ABB60405.1"/>
    <property type="molecule type" value="Genomic_DNA"/>
</dbReference>
<dbReference type="RefSeq" id="WP_001295564.1">
    <property type="nucleotide sequence ID" value="NC_007606.1"/>
</dbReference>
<dbReference type="RefSeq" id="YP_401894.1">
    <property type="nucleotide sequence ID" value="NC_007606.1"/>
</dbReference>
<dbReference type="SMR" id="Q32JV2"/>
<dbReference type="STRING" id="300267.SDY_0172"/>
<dbReference type="EnsemblBacteria" id="ABB60405">
    <property type="protein sequence ID" value="ABB60405"/>
    <property type="gene ID" value="SDY_0172"/>
</dbReference>
<dbReference type="GeneID" id="93777270"/>
<dbReference type="KEGG" id="sdy:SDY_0172"/>
<dbReference type="PATRIC" id="fig|300267.13.peg.198"/>
<dbReference type="HOGENOM" id="CLU_069054_5_3_6"/>
<dbReference type="Proteomes" id="UP000002716">
    <property type="component" value="Chromosome"/>
</dbReference>
<dbReference type="GO" id="GO:0005829">
    <property type="term" value="C:cytosol"/>
    <property type="evidence" value="ECO:0007669"/>
    <property type="project" value="TreeGrafter"/>
</dbReference>
<dbReference type="GO" id="GO:0051537">
    <property type="term" value="F:2 iron, 2 sulfur cluster binding"/>
    <property type="evidence" value="ECO:0007669"/>
    <property type="project" value="TreeGrafter"/>
</dbReference>
<dbReference type="GO" id="GO:0051539">
    <property type="term" value="F:4 iron, 4 sulfur cluster binding"/>
    <property type="evidence" value="ECO:0007669"/>
    <property type="project" value="TreeGrafter"/>
</dbReference>
<dbReference type="GO" id="GO:0005506">
    <property type="term" value="F:iron ion binding"/>
    <property type="evidence" value="ECO:0007669"/>
    <property type="project" value="UniProtKB-UniRule"/>
</dbReference>
<dbReference type="GO" id="GO:0016226">
    <property type="term" value="P:iron-sulfur cluster assembly"/>
    <property type="evidence" value="ECO:0007669"/>
    <property type="project" value="UniProtKB-UniRule"/>
</dbReference>
<dbReference type="FunFam" id="2.60.300.12:FF:000002">
    <property type="entry name" value="Iron-sulfur cluster insertion protein ErpA"/>
    <property type="match status" value="1"/>
</dbReference>
<dbReference type="Gene3D" id="2.60.300.12">
    <property type="entry name" value="HesB-like domain"/>
    <property type="match status" value="1"/>
</dbReference>
<dbReference type="HAMAP" id="MF_01380">
    <property type="entry name" value="Fe_S_insert_ErpA"/>
    <property type="match status" value="1"/>
</dbReference>
<dbReference type="InterPro" id="IPR000361">
    <property type="entry name" value="FeS_biogenesis"/>
</dbReference>
<dbReference type="InterPro" id="IPR016092">
    <property type="entry name" value="FeS_cluster_insertion"/>
</dbReference>
<dbReference type="InterPro" id="IPR017870">
    <property type="entry name" value="FeS_cluster_insertion_CS"/>
</dbReference>
<dbReference type="InterPro" id="IPR023063">
    <property type="entry name" value="FeS_cluster_insertion_RrpA"/>
</dbReference>
<dbReference type="InterPro" id="IPR035903">
    <property type="entry name" value="HesB-like_dom_sf"/>
</dbReference>
<dbReference type="NCBIfam" id="TIGR00049">
    <property type="entry name" value="iron-sulfur cluster assembly accessory protein"/>
    <property type="match status" value="1"/>
</dbReference>
<dbReference type="NCBIfam" id="NF010147">
    <property type="entry name" value="PRK13623.1"/>
    <property type="match status" value="1"/>
</dbReference>
<dbReference type="PANTHER" id="PTHR43011">
    <property type="entry name" value="IRON-SULFUR CLUSTER ASSEMBLY 2 HOMOLOG, MITOCHONDRIAL"/>
    <property type="match status" value="1"/>
</dbReference>
<dbReference type="PANTHER" id="PTHR43011:SF1">
    <property type="entry name" value="IRON-SULFUR CLUSTER ASSEMBLY 2 HOMOLOG, MITOCHONDRIAL"/>
    <property type="match status" value="1"/>
</dbReference>
<dbReference type="Pfam" id="PF01521">
    <property type="entry name" value="Fe-S_biosyn"/>
    <property type="match status" value="1"/>
</dbReference>
<dbReference type="SUPFAM" id="SSF89360">
    <property type="entry name" value="HesB-like domain"/>
    <property type="match status" value="1"/>
</dbReference>
<dbReference type="PROSITE" id="PS01152">
    <property type="entry name" value="HESB"/>
    <property type="match status" value="1"/>
</dbReference>
<name>ERPA_SHIDS</name>
<organism>
    <name type="scientific">Shigella dysenteriae serotype 1 (strain Sd197)</name>
    <dbReference type="NCBI Taxonomy" id="300267"/>
    <lineage>
        <taxon>Bacteria</taxon>
        <taxon>Pseudomonadati</taxon>
        <taxon>Pseudomonadota</taxon>
        <taxon>Gammaproteobacteria</taxon>
        <taxon>Enterobacterales</taxon>
        <taxon>Enterobacteriaceae</taxon>
        <taxon>Shigella</taxon>
    </lineage>
</organism>
<reference key="1">
    <citation type="journal article" date="2005" name="Nucleic Acids Res.">
        <title>Genome dynamics and diversity of Shigella species, the etiologic agents of bacillary dysentery.</title>
        <authorList>
            <person name="Yang F."/>
            <person name="Yang J."/>
            <person name="Zhang X."/>
            <person name="Chen L."/>
            <person name="Jiang Y."/>
            <person name="Yan Y."/>
            <person name="Tang X."/>
            <person name="Wang J."/>
            <person name="Xiong Z."/>
            <person name="Dong J."/>
            <person name="Xue Y."/>
            <person name="Zhu Y."/>
            <person name="Xu X."/>
            <person name="Sun L."/>
            <person name="Chen S."/>
            <person name="Nie H."/>
            <person name="Peng J."/>
            <person name="Xu J."/>
            <person name="Wang Y."/>
            <person name="Yuan Z."/>
            <person name="Wen Y."/>
            <person name="Yao Z."/>
            <person name="Shen Y."/>
            <person name="Qiang B."/>
            <person name="Hou Y."/>
            <person name="Yu J."/>
            <person name="Jin Q."/>
        </authorList>
    </citation>
    <scope>NUCLEOTIDE SEQUENCE [LARGE SCALE GENOMIC DNA]</scope>
    <source>
        <strain>Sd197</strain>
    </source>
</reference>
<comment type="function">
    <text evidence="1">Required for insertion of 4Fe-4S clusters for at least IspG.</text>
</comment>
<comment type="cofactor">
    <cofactor evidence="1">
        <name>iron-sulfur cluster</name>
        <dbReference type="ChEBI" id="CHEBI:30408"/>
    </cofactor>
    <text evidence="1">Binds 1 iron-sulfur cluster per subunit.</text>
</comment>
<comment type="subunit">
    <text evidence="1">Homodimer.</text>
</comment>
<comment type="similarity">
    <text evidence="1">Belongs to the HesB/IscA family.</text>
</comment>
<keyword id="KW-0408">Iron</keyword>
<keyword id="KW-0411">Iron-sulfur</keyword>
<keyword id="KW-0479">Metal-binding</keyword>
<keyword id="KW-1185">Reference proteome</keyword>
<feature type="chain" id="PRO_0000311560" description="Iron-sulfur cluster insertion protein ErpA">
    <location>
        <begin position="1"/>
        <end position="114"/>
    </location>
</feature>
<feature type="binding site" evidence="1">
    <location>
        <position position="42"/>
    </location>
    <ligand>
        <name>iron-sulfur cluster</name>
        <dbReference type="ChEBI" id="CHEBI:30408"/>
    </ligand>
</feature>
<feature type="binding site" evidence="1">
    <location>
        <position position="106"/>
    </location>
    <ligand>
        <name>iron-sulfur cluster</name>
        <dbReference type="ChEBI" id="CHEBI:30408"/>
    </ligand>
</feature>
<feature type="binding site" evidence="1">
    <location>
        <position position="108"/>
    </location>
    <ligand>
        <name>iron-sulfur cluster</name>
        <dbReference type="ChEBI" id="CHEBI:30408"/>
    </ligand>
</feature>
<protein>
    <recommendedName>
        <fullName evidence="1">Iron-sulfur cluster insertion protein ErpA</fullName>
    </recommendedName>
</protein>
<accession>Q32JV2</accession>
<gene>
    <name evidence="1" type="primary">erpA</name>
    <name type="ordered locus">SDY_0172</name>
</gene>
<proteinExistence type="inferred from homology"/>
<evidence type="ECO:0000255" key="1">
    <source>
        <dbReference type="HAMAP-Rule" id="MF_01380"/>
    </source>
</evidence>